<name>DUT_SYNC1</name>
<accession>Q3A499</accession>
<sequence length="147" mass="15733">MKTITIKVKRLHSKAMLPAYMSPHAAGMDLYACPDGEVVVKPGCRTIVPTGIALAIPVGYEGQVRPRSGLALHHGVTLVNTPGTIDADYRGELGIIIINHGDEDFVVSPGDRIAQLVIAPVHRAVLETVEELDETDRNEGGFGHTGF</sequence>
<reference key="1">
    <citation type="submission" date="2005-10" db="EMBL/GenBank/DDBJ databases">
        <title>Complete sequence of Pelobacter carbinolicus DSM 2380.</title>
        <authorList>
            <person name="Copeland A."/>
            <person name="Lucas S."/>
            <person name="Lapidus A."/>
            <person name="Barry K."/>
            <person name="Detter J.C."/>
            <person name="Glavina T."/>
            <person name="Hammon N."/>
            <person name="Israni S."/>
            <person name="Pitluck S."/>
            <person name="Chertkov O."/>
            <person name="Schmutz J."/>
            <person name="Larimer F."/>
            <person name="Land M."/>
            <person name="Kyrpides N."/>
            <person name="Ivanova N."/>
            <person name="Richardson P."/>
        </authorList>
    </citation>
    <scope>NUCLEOTIDE SEQUENCE [LARGE SCALE GENOMIC DNA]</scope>
    <source>
        <strain>DSM 2380 / NBRC 103641 / GraBd1</strain>
    </source>
</reference>
<keyword id="KW-0378">Hydrolase</keyword>
<keyword id="KW-0460">Magnesium</keyword>
<keyword id="KW-0479">Metal-binding</keyword>
<keyword id="KW-0546">Nucleotide metabolism</keyword>
<keyword id="KW-1185">Reference proteome</keyword>
<gene>
    <name evidence="1" type="primary">dut</name>
    <name type="ordered locus">Pcar_1563</name>
</gene>
<comment type="function">
    <text evidence="1">This enzyme is involved in nucleotide metabolism: it produces dUMP, the immediate precursor of thymidine nucleotides and it decreases the intracellular concentration of dUTP so that uracil cannot be incorporated into DNA.</text>
</comment>
<comment type="catalytic activity">
    <reaction evidence="1">
        <text>dUTP + H2O = dUMP + diphosphate + H(+)</text>
        <dbReference type="Rhea" id="RHEA:10248"/>
        <dbReference type="ChEBI" id="CHEBI:15377"/>
        <dbReference type="ChEBI" id="CHEBI:15378"/>
        <dbReference type="ChEBI" id="CHEBI:33019"/>
        <dbReference type="ChEBI" id="CHEBI:61555"/>
        <dbReference type="ChEBI" id="CHEBI:246422"/>
        <dbReference type="EC" id="3.6.1.23"/>
    </reaction>
</comment>
<comment type="cofactor">
    <cofactor evidence="1">
        <name>Mg(2+)</name>
        <dbReference type="ChEBI" id="CHEBI:18420"/>
    </cofactor>
</comment>
<comment type="pathway">
    <text evidence="1">Pyrimidine metabolism; dUMP biosynthesis; dUMP from dCTP (dUTP route): step 2/2.</text>
</comment>
<comment type="similarity">
    <text evidence="1">Belongs to the dUTPase family.</text>
</comment>
<protein>
    <recommendedName>
        <fullName evidence="1">Deoxyuridine 5'-triphosphate nucleotidohydrolase</fullName>
        <shortName evidence="1">dUTPase</shortName>
        <ecNumber evidence="1">3.6.1.23</ecNumber>
    </recommendedName>
    <alternativeName>
        <fullName evidence="1">dUTP pyrophosphatase</fullName>
    </alternativeName>
</protein>
<dbReference type="EC" id="3.6.1.23" evidence="1"/>
<dbReference type="EMBL" id="CP000142">
    <property type="protein sequence ID" value="ABA88808.1"/>
    <property type="molecule type" value="Genomic_DNA"/>
</dbReference>
<dbReference type="RefSeq" id="WP_011341291.1">
    <property type="nucleotide sequence ID" value="NC_007498.2"/>
</dbReference>
<dbReference type="SMR" id="Q3A499"/>
<dbReference type="STRING" id="338963.Pcar_1563"/>
<dbReference type="KEGG" id="pca:Pcar_1563"/>
<dbReference type="eggNOG" id="COG0756">
    <property type="taxonomic scope" value="Bacteria"/>
</dbReference>
<dbReference type="HOGENOM" id="CLU_068508_1_0_7"/>
<dbReference type="OrthoDB" id="9809956at2"/>
<dbReference type="UniPathway" id="UPA00610">
    <property type="reaction ID" value="UER00666"/>
</dbReference>
<dbReference type="Proteomes" id="UP000002534">
    <property type="component" value="Chromosome"/>
</dbReference>
<dbReference type="GO" id="GO:0004170">
    <property type="term" value="F:dUTP diphosphatase activity"/>
    <property type="evidence" value="ECO:0007669"/>
    <property type="project" value="UniProtKB-UniRule"/>
</dbReference>
<dbReference type="GO" id="GO:0000287">
    <property type="term" value="F:magnesium ion binding"/>
    <property type="evidence" value="ECO:0007669"/>
    <property type="project" value="UniProtKB-UniRule"/>
</dbReference>
<dbReference type="GO" id="GO:0006226">
    <property type="term" value="P:dUMP biosynthetic process"/>
    <property type="evidence" value="ECO:0007669"/>
    <property type="project" value="UniProtKB-UniRule"/>
</dbReference>
<dbReference type="GO" id="GO:0046081">
    <property type="term" value="P:dUTP catabolic process"/>
    <property type="evidence" value="ECO:0007669"/>
    <property type="project" value="InterPro"/>
</dbReference>
<dbReference type="CDD" id="cd07557">
    <property type="entry name" value="trimeric_dUTPase"/>
    <property type="match status" value="1"/>
</dbReference>
<dbReference type="FunFam" id="2.70.40.10:FF:000002">
    <property type="entry name" value="dUTP diphosphatase"/>
    <property type="match status" value="1"/>
</dbReference>
<dbReference type="Gene3D" id="2.70.40.10">
    <property type="match status" value="1"/>
</dbReference>
<dbReference type="HAMAP" id="MF_00116">
    <property type="entry name" value="dUTPase_bact"/>
    <property type="match status" value="1"/>
</dbReference>
<dbReference type="InterPro" id="IPR008181">
    <property type="entry name" value="dUTPase"/>
</dbReference>
<dbReference type="InterPro" id="IPR029054">
    <property type="entry name" value="dUTPase-like"/>
</dbReference>
<dbReference type="InterPro" id="IPR036157">
    <property type="entry name" value="dUTPase-like_sf"/>
</dbReference>
<dbReference type="InterPro" id="IPR033704">
    <property type="entry name" value="dUTPase_trimeric"/>
</dbReference>
<dbReference type="NCBIfam" id="TIGR00576">
    <property type="entry name" value="dut"/>
    <property type="match status" value="1"/>
</dbReference>
<dbReference type="NCBIfam" id="NF001862">
    <property type="entry name" value="PRK00601.1"/>
    <property type="match status" value="1"/>
</dbReference>
<dbReference type="PANTHER" id="PTHR11241">
    <property type="entry name" value="DEOXYURIDINE 5'-TRIPHOSPHATE NUCLEOTIDOHYDROLASE"/>
    <property type="match status" value="1"/>
</dbReference>
<dbReference type="PANTHER" id="PTHR11241:SF0">
    <property type="entry name" value="DEOXYURIDINE 5'-TRIPHOSPHATE NUCLEOTIDOHYDROLASE"/>
    <property type="match status" value="1"/>
</dbReference>
<dbReference type="Pfam" id="PF00692">
    <property type="entry name" value="dUTPase"/>
    <property type="match status" value="1"/>
</dbReference>
<dbReference type="SUPFAM" id="SSF51283">
    <property type="entry name" value="dUTPase-like"/>
    <property type="match status" value="1"/>
</dbReference>
<feature type="chain" id="PRO_0000231417" description="Deoxyuridine 5'-triphosphate nucleotidohydrolase">
    <location>
        <begin position="1"/>
        <end position="147"/>
    </location>
</feature>
<feature type="binding site" evidence="1">
    <location>
        <begin position="67"/>
        <end position="69"/>
    </location>
    <ligand>
        <name>substrate</name>
    </ligand>
</feature>
<feature type="binding site" evidence="1">
    <location>
        <position position="80"/>
    </location>
    <ligand>
        <name>substrate</name>
    </ligand>
</feature>
<feature type="binding site" evidence="1">
    <location>
        <begin position="84"/>
        <end position="86"/>
    </location>
    <ligand>
        <name>substrate</name>
    </ligand>
</feature>
<evidence type="ECO:0000255" key="1">
    <source>
        <dbReference type="HAMAP-Rule" id="MF_00116"/>
    </source>
</evidence>
<organism>
    <name type="scientific">Syntrophotalea carbinolica (strain DSM 2380 / NBRC 103641 / GraBd1)</name>
    <name type="common">Pelobacter carbinolicus</name>
    <dbReference type="NCBI Taxonomy" id="338963"/>
    <lineage>
        <taxon>Bacteria</taxon>
        <taxon>Pseudomonadati</taxon>
        <taxon>Thermodesulfobacteriota</taxon>
        <taxon>Desulfuromonadia</taxon>
        <taxon>Desulfuromonadales</taxon>
        <taxon>Syntrophotaleaceae</taxon>
        <taxon>Syntrophotalea</taxon>
    </lineage>
</organism>
<proteinExistence type="inferred from homology"/>